<evidence type="ECO:0000250" key="1"/>
<evidence type="ECO:0000250" key="2">
    <source>
        <dbReference type="UniProtKB" id="P17802"/>
    </source>
</evidence>
<evidence type="ECO:0000250" key="3">
    <source>
        <dbReference type="UniProtKB" id="P83847"/>
    </source>
</evidence>
<evidence type="ECO:0000305" key="4"/>
<comment type="function">
    <text evidence="2">Adenine glycosylase active on G-A mispairs. MutY also corrects error-prone DNA synthesis past GO lesions which are due to the oxidatively damaged form of guanine: 7,8-dihydro-8-oxoguanine (8-oxo-dGTP).</text>
</comment>
<comment type="catalytic activity">
    <reaction evidence="2">
        <text>Hydrolyzes free adenine bases from 7,8-dihydro-8-oxoguanine:adenine mismatched double-stranded DNA, leaving an apurinic site.</text>
        <dbReference type="EC" id="3.2.2.31"/>
    </reaction>
</comment>
<comment type="cofactor">
    <cofactor evidence="2">
        <name>[4Fe-4S] cluster</name>
        <dbReference type="ChEBI" id="CHEBI:49883"/>
    </cofactor>
    <text evidence="2">Binds 1 [4Fe-4S] cluster. The cluster does not appear to play a role in catalysis, but is probably involved in the proper positioning of the enzyme along the DNA strand.</text>
</comment>
<comment type="subunit">
    <text evidence="2">Monomer.</text>
</comment>
<comment type="similarity">
    <text evidence="4">Belongs to the Nth/MutY family.</text>
</comment>
<name>MUTY_BUCAP</name>
<accession>Q8K926</accession>
<dbReference type="EC" id="3.2.2.31" evidence="2"/>
<dbReference type="EMBL" id="AE013218">
    <property type="protein sequence ID" value="AAM68075.1"/>
    <property type="molecule type" value="Genomic_DNA"/>
</dbReference>
<dbReference type="RefSeq" id="WP_011054041.1">
    <property type="nucleotide sequence ID" value="NC_004061.1"/>
</dbReference>
<dbReference type="SMR" id="Q8K926"/>
<dbReference type="STRING" id="198804.BUsg_534"/>
<dbReference type="GeneID" id="93004009"/>
<dbReference type="KEGG" id="bas:BUsg_534"/>
<dbReference type="eggNOG" id="COG1194">
    <property type="taxonomic scope" value="Bacteria"/>
</dbReference>
<dbReference type="HOGENOM" id="CLU_012862_0_2_6"/>
<dbReference type="Proteomes" id="UP000000416">
    <property type="component" value="Chromosome"/>
</dbReference>
<dbReference type="GO" id="GO:0051539">
    <property type="term" value="F:4 iron, 4 sulfur cluster binding"/>
    <property type="evidence" value="ECO:0007669"/>
    <property type="project" value="UniProtKB-KW"/>
</dbReference>
<dbReference type="GO" id="GO:0034039">
    <property type="term" value="F:8-oxo-7,8-dihydroguanine DNA N-glycosylase activity"/>
    <property type="evidence" value="ECO:0007669"/>
    <property type="project" value="TreeGrafter"/>
</dbReference>
<dbReference type="GO" id="GO:0035485">
    <property type="term" value="F:adenine/guanine mispair binding"/>
    <property type="evidence" value="ECO:0007669"/>
    <property type="project" value="TreeGrafter"/>
</dbReference>
<dbReference type="GO" id="GO:0046872">
    <property type="term" value="F:metal ion binding"/>
    <property type="evidence" value="ECO:0007669"/>
    <property type="project" value="UniProtKB-KW"/>
</dbReference>
<dbReference type="GO" id="GO:0032357">
    <property type="term" value="F:oxidized purine DNA binding"/>
    <property type="evidence" value="ECO:0007669"/>
    <property type="project" value="TreeGrafter"/>
</dbReference>
<dbReference type="GO" id="GO:0000701">
    <property type="term" value="F:purine-specific mismatch base pair DNA N-glycosylase activity"/>
    <property type="evidence" value="ECO:0007669"/>
    <property type="project" value="UniProtKB-EC"/>
</dbReference>
<dbReference type="GO" id="GO:0006284">
    <property type="term" value="P:base-excision repair"/>
    <property type="evidence" value="ECO:0007669"/>
    <property type="project" value="InterPro"/>
</dbReference>
<dbReference type="GO" id="GO:0006298">
    <property type="term" value="P:mismatch repair"/>
    <property type="evidence" value="ECO:0007669"/>
    <property type="project" value="TreeGrafter"/>
</dbReference>
<dbReference type="CDD" id="cd00056">
    <property type="entry name" value="ENDO3c"/>
    <property type="match status" value="1"/>
</dbReference>
<dbReference type="CDD" id="cd03431">
    <property type="entry name" value="NUDIX_DNA_Glycosylase_C-MutY"/>
    <property type="match status" value="1"/>
</dbReference>
<dbReference type="Gene3D" id="1.10.1670.10">
    <property type="entry name" value="Helix-hairpin-Helix base-excision DNA repair enzymes (C-terminal)"/>
    <property type="match status" value="1"/>
</dbReference>
<dbReference type="Gene3D" id="1.10.340.30">
    <property type="entry name" value="Hypothetical protein, domain 2"/>
    <property type="match status" value="1"/>
</dbReference>
<dbReference type="Gene3D" id="3.90.79.10">
    <property type="entry name" value="Nucleoside Triphosphate Pyrophosphohydrolase"/>
    <property type="match status" value="1"/>
</dbReference>
<dbReference type="InterPro" id="IPR005760">
    <property type="entry name" value="A/G_AdeGlyc_MutY"/>
</dbReference>
<dbReference type="InterPro" id="IPR011257">
    <property type="entry name" value="DNA_glycosylase"/>
</dbReference>
<dbReference type="InterPro" id="IPR004036">
    <property type="entry name" value="Endonuclease-III-like_CS2"/>
</dbReference>
<dbReference type="InterPro" id="IPR003651">
    <property type="entry name" value="Endonuclease3_FeS-loop_motif"/>
</dbReference>
<dbReference type="InterPro" id="IPR004035">
    <property type="entry name" value="Endouclease-III_FeS-bd_BS"/>
</dbReference>
<dbReference type="InterPro" id="IPR003265">
    <property type="entry name" value="HhH-GPD_domain"/>
</dbReference>
<dbReference type="InterPro" id="IPR023170">
    <property type="entry name" value="HhH_base_excis_C"/>
</dbReference>
<dbReference type="InterPro" id="IPR000445">
    <property type="entry name" value="HhH_motif"/>
</dbReference>
<dbReference type="InterPro" id="IPR044298">
    <property type="entry name" value="MIG/MutY"/>
</dbReference>
<dbReference type="InterPro" id="IPR029119">
    <property type="entry name" value="MutY_C"/>
</dbReference>
<dbReference type="InterPro" id="IPR015797">
    <property type="entry name" value="NUDIX_hydrolase-like_dom_sf"/>
</dbReference>
<dbReference type="NCBIfam" id="TIGR01084">
    <property type="entry name" value="mutY"/>
    <property type="match status" value="1"/>
</dbReference>
<dbReference type="PANTHER" id="PTHR42944">
    <property type="entry name" value="ADENINE DNA GLYCOSYLASE"/>
    <property type="match status" value="1"/>
</dbReference>
<dbReference type="PANTHER" id="PTHR42944:SF1">
    <property type="entry name" value="ADENINE DNA GLYCOSYLASE"/>
    <property type="match status" value="1"/>
</dbReference>
<dbReference type="Pfam" id="PF00633">
    <property type="entry name" value="HHH"/>
    <property type="match status" value="1"/>
</dbReference>
<dbReference type="Pfam" id="PF00730">
    <property type="entry name" value="HhH-GPD"/>
    <property type="match status" value="1"/>
</dbReference>
<dbReference type="Pfam" id="PF14815">
    <property type="entry name" value="NUDIX_4"/>
    <property type="match status" value="1"/>
</dbReference>
<dbReference type="SMART" id="SM00478">
    <property type="entry name" value="ENDO3c"/>
    <property type="match status" value="1"/>
</dbReference>
<dbReference type="SMART" id="SM00525">
    <property type="entry name" value="FES"/>
    <property type="match status" value="1"/>
</dbReference>
<dbReference type="SUPFAM" id="SSF48150">
    <property type="entry name" value="DNA-glycosylase"/>
    <property type="match status" value="1"/>
</dbReference>
<dbReference type="SUPFAM" id="SSF55811">
    <property type="entry name" value="Nudix"/>
    <property type="match status" value="1"/>
</dbReference>
<dbReference type="PROSITE" id="PS00764">
    <property type="entry name" value="ENDONUCLEASE_III_1"/>
    <property type="match status" value="1"/>
</dbReference>
<dbReference type="PROSITE" id="PS01155">
    <property type="entry name" value="ENDONUCLEASE_III_2"/>
    <property type="match status" value="1"/>
</dbReference>
<gene>
    <name type="primary">mutY</name>
    <name type="ordered locus">BUsg_534</name>
</gene>
<sequence>MTIYVFSQLILNWYHINGRKNLPWKKDKTLYKVWISEIMLQQTTVKTAIPYFKNFISRFPNIQSLNQSKLDDILCLWSGLGYYKRAENIYKTVKIIKEEFQEKFPTGFSDLIKLPGIGRSTAGAILSLSLDYFFPILEGNVKRILMRYYGIIGYVTEKKIEQKLWYLIELITPIHNTGSFNQGIMDIGALICTPKNPKCNLCPLIQKCIAYKEKNWIKYPLKKKKKIILEKKSWFVVIKYQNQFWIEKNTEKKIWKNLFCFPNFDTKIKTIEWLKKNKINIDKKHKKIQSFYHKFSHFTLHIIPILVNLSFFKNFQNSKKTGIWYDLKNTHDIGLPKPVQKILEIFK</sequence>
<keyword id="KW-0004">4Fe-4S</keyword>
<keyword id="KW-0227">DNA damage</keyword>
<keyword id="KW-0234">DNA repair</keyword>
<keyword id="KW-0326">Glycosidase</keyword>
<keyword id="KW-0378">Hydrolase</keyword>
<keyword id="KW-0408">Iron</keyword>
<keyword id="KW-0411">Iron-sulfur</keyword>
<keyword id="KW-0479">Metal-binding</keyword>
<reference key="1">
    <citation type="journal article" date="2002" name="Science">
        <title>50 million years of genomic stasis in endosymbiotic bacteria.</title>
        <authorList>
            <person name="Tamas I."/>
            <person name="Klasson L."/>
            <person name="Canbaeck B."/>
            <person name="Naeslund A.K."/>
            <person name="Eriksson A.-S."/>
            <person name="Wernegreen J.J."/>
            <person name="Sandstroem J.P."/>
            <person name="Moran N.A."/>
            <person name="Andersson S.G.E."/>
        </authorList>
    </citation>
    <scope>NUCLEOTIDE SEQUENCE [LARGE SCALE GENOMIC DNA]</scope>
    <source>
        <strain>Sg</strain>
    </source>
</reference>
<feature type="chain" id="PRO_0000102232" description="Adenine DNA glycosylase">
    <location>
        <begin position="1"/>
        <end position="347"/>
    </location>
</feature>
<feature type="active site" description="Proton donor/acceptor" evidence="3">
    <location>
        <position position="37"/>
    </location>
</feature>
<feature type="binding site" evidence="1">
    <location>
        <position position="192"/>
    </location>
    <ligand>
        <name>[4Fe-4S] cluster</name>
        <dbReference type="ChEBI" id="CHEBI:49883"/>
    </ligand>
</feature>
<feature type="binding site" evidence="1">
    <location>
        <position position="199"/>
    </location>
    <ligand>
        <name>[4Fe-4S] cluster</name>
        <dbReference type="ChEBI" id="CHEBI:49883"/>
    </ligand>
</feature>
<feature type="binding site" evidence="1">
    <location>
        <position position="202"/>
    </location>
    <ligand>
        <name>[4Fe-4S] cluster</name>
        <dbReference type="ChEBI" id="CHEBI:49883"/>
    </ligand>
</feature>
<feature type="binding site" evidence="1">
    <location>
        <position position="208"/>
    </location>
    <ligand>
        <name>[4Fe-4S] cluster</name>
        <dbReference type="ChEBI" id="CHEBI:49883"/>
    </ligand>
</feature>
<feature type="site" description="Transition state stabilizer" evidence="3">
    <location>
        <position position="138"/>
    </location>
</feature>
<protein>
    <recommendedName>
        <fullName>Adenine DNA glycosylase</fullName>
        <ecNumber evidence="2">3.2.2.31</ecNumber>
    </recommendedName>
</protein>
<proteinExistence type="inferred from homology"/>
<organism>
    <name type="scientific">Buchnera aphidicola subsp. Schizaphis graminum (strain Sg)</name>
    <dbReference type="NCBI Taxonomy" id="198804"/>
    <lineage>
        <taxon>Bacteria</taxon>
        <taxon>Pseudomonadati</taxon>
        <taxon>Pseudomonadota</taxon>
        <taxon>Gammaproteobacteria</taxon>
        <taxon>Enterobacterales</taxon>
        <taxon>Erwiniaceae</taxon>
        <taxon>Buchnera</taxon>
    </lineage>
</organism>